<proteinExistence type="inferred from homology"/>
<accession>P9WIJ2</accession>
<accession>L0T3J0</accession>
<accession>P96275</accession>
<reference key="1">
    <citation type="journal article" date="2002" name="J. Bacteriol.">
        <title>Whole-genome comparison of Mycobacterium tuberculosis clinical and laboratory strains.</title>
        <authorList>
            <person name="Fleischmann R.D."/>
            <person name="Alland D."/>
            <person name="Eisen J.A."/>
            <person name="Carpenter L."/>
            <person name="White O."/>
            <person name="Peterson J.D."/>
            <person name="DeBoy R.T."/>
            <person name="Dodson R.J."/>
            <person name="Gwinn M.L."/>
            <person name="Haft D.H."/>
            <person name="Hickey E.K."/>
            <person name="Kolonay J.F."/>
            <person name="Nelson W.C."/>
            <person name="Umayam L.A."/>
            <person name="Ermolaeva M.D."/>
            <person name="Salzberg S.L."/>
            <person name="Delcher A."/>
            <person name="Utterback T.R."/>
            <person name="Weidman J.F."/>
            <person name="Khouri H.M."/>
            <person name="Gill J."/>
            <person name="Mikula A."/>
            <person name="Bishai W."/>
            <person name="Jacobs W.R. Jr."/>
            <person name="Venter J.C."/>
            <person name="Fraser C.M."/>
        </authorList>
    </citation>
    <scope>NUCLEOTIDE SEQUENCE [LARGE SCALE GENOMIC DNA]</scope>
    <source>
        <strain>CDC 1551 / Oshkosh</strain>
    </source>
</reference>
<protein>
    <recommendedName>
        <fullName evidence="1">Peptide deformylase</fullName>
        <shortName evidence="1">PDF</shortName>
        <ecNumber evidence="1">3.5.1.88</ecNumber>
    </recommendedName>
    <alternativeName>
        <fullName evidence="1">Polypeptide deformylase</fullName>
    </alternativeName>
</protein>
<organism>
    <name type="scientific">Mycobacterium tuberculosis (strain CDC 1551 / Oshkosh)</name>
    <dbReference type="NCBI Taxonomy" id="83331"/>
    <lineage>
        <taxon>Bacteria</taxon>
        <taxon>Bacillati</taxon>
        <taxon>Actinomycetota</taxon>
        <taxon>Actinomycetes</taxon>
        <taxon>Mycobacteriales</taxon>
        <taxon>Mycobacteriaceae</taxon>
        <taxon>Mycobacterium</taxon>
        <taxon>Mycobacterium tuberculosis complex</taxon>
    </lineage>
</organism>
<sequence>MAVVPIRIVGDPVLHTATTPVTVAADGSLPADLAQLIATMYDTMDAANGVGLAANQIGCSLRLFVYDCAADRAMTARRRGVVINPVLETSEIPETMPDPDTDDEGCLSVPGESFPTGRAKWARVTGLDADGSPVSIEGTGLFARMLQHETGHLDGFLYLDRLIGRYARNAKRAVKSHGWGVPGLSWLPGEDPDPFGH</sequence>
<evidence type="ECO:0000255" key="1">
    <source>
        <dbReference type="HAMAP-Rule" id="MF_00163"/>
    </source>
</evidence>
<gene>
    <name evidence="1" type="primary">def</name>
    <name type="ordered locus">MT0444</name>
</gene>
<comment type="function">
    <text evidence="1">Removes the formyl group from the N-terminal Met of newly synthesized proteins. Requires at least a dipeptide for an efficient rate of reaction. N-terminal L-methionine is a prerequisite for activity but the enzyme has broad specificity at other positions.</text>
</comment>
<comment type="catalytic activity">
    <reaction evidence="1">
        <text>N-terminal N-formyl-L-methionyl-[peptide] + H2O = N-terminal L-methionyl-[peptide] + formate</text>
        <dbReference type="Rhea" id="RHEA:24420"/>
        <dbReference type="Rhea" id="RHEA-COMP:10639"/>
        <dbReference type="Rhea" id="RHEA-COMP:10640"/>
        <dbReference type="ChEBI" id="CHEBI:15377"/>
        <dbReference type="ChEBI" id="CHEBI:15740"/>
        <dbReference type="ChEBI" id="CHEBI:49298"/>
        <dbReference type="ChEBI" id="CHEBI:64731"/>
        <dbReference type="EC" id="3.5.1.88"/>
    </reaction>
</comment>
<comment type="cofactor">
    <cofactor evidence="1">
        <name>Fe(2+)</name>
        <dbReference type="ChEBI" id="CHEBI:29033"/>
    </cofactor>
    <text evidence="1">Binds 1 Fe(2+) ion.</text>
</comment>
<comment type="similarity">
    <text evidence="1">Belongs to the polypeptide deformylase family.</text>
</comment>
<dbReference type="EC" id="3.5.1.88" evidence="1"/>
<dbReference type="EMBL" id="AE000516">
    <property type="protein sequence ID" value="AAK44667.1"/>
    <property type="molecule type" value="Genomic_DNA"/>
</dbReference>
<dbReference type="PIR" id="C70631">
    <property type="entry name" value="C70631"/>
</dbReference>
<dbReference type="RefSeq" id="WP_003402185.1">
    <property type="nucleotide sequence ID" value="NZ_KK341227.1"/>
</dbReference>
<dbReference type="SMR" id="P9WIJ2"/>
<dbReference type="KEGG" id="mtc:MT0444"/>
<dbReference type="PATRIC" id="fig|83331.31.peg.472"/>
<dbReference type="HOGENOM" id="CLU_061901_1_2_11"/>
<dbReference type="Proteomes" id="UP000001020">
    <property type="component" value="Chromosome"/>
</dbReference>
<dbReference type="GO" id="GO:0046872">
    <property type="term" value="F:metal ion binding"/>
    <property type="evidence" value="ECO:0007669"/>
    <property type="project" value="UniProtKB-KW"/>
</dbReference>
<dbReference type="GO" id="GO:0042586">
    <property type="term" value="F:peptide deformylase activity"/>
    <property type="evidence" value="ECO:0007669"/>
    <property type="project" value="UniProtKB-UniRule"/>
</dbReference>
<dbReference type="GO" id="GO:0043686">
    <property type="term" value="P:co-translational protein modification"/>
    <property type="evidence" value="ECO:0007669"/>
    <property type="project" value="TreeGrafter"/>
</dbReference>
<dbReference type="GO" id="GO:0006412">
    <property type="term" value="P:translation"/>
    <property type="evidence" value="ECO:0007669"/>
    <property type="project" value="UniProtKB-UniRule"/>
</dbReference>
<dbReference type="CDD" id="cd00487">
    <property type="entry name" value="Pep_deformylase"/>
    <property type="match status" value="1"/>
</dbReference>
<dbReference type="FunFam" id="3.90.45.10:FF:000011">
    <property type="entry name" value="Peptide deformylase"/>
    <property type="match status" value="1"/>
</dbReference>
<dbReference type="Gene3D" id="3.90.45.10">
    <property type="entry name" value="Peptide deformylase"/>
    <property type="match status" value="1"/>
</dbReference>
<dbReference type="HAMAP" id="MF_00163">
    <property type="entry name" value="Pep_deformylase"/>
    <property type="match status" value="1"/>
</dbReference>
<dbReference type="InterPro" id="IPR023635">
    <property type="entry name" value="Peptide_deformylase"/>
</dbReference>
<dbReference type="InterPro" id="IPR036821">
    <property type="entry name" value="Peptide_deformylase_sf"/>
</dbReference>
<dbReference type="NCBIfam" id="TIGR00079">
    <property type="entry name" value="pept_deformyl"/>
    <property type="match status" value="1"/>
</dbReference>
<dbReference type="NCBIfam" id="NF001159">
    <property type="entry name" value="PRK00150.1-3"/>
    <property type="match status" value="1"/>
</dbReference>
<dbReference type="NCBIfam" id="NF009483">
    <property type="entry name" value="PRK12846.1-4"/>
    <property type="match status" value="1"/>
</dbReference>
<dbReference type="PANTHER" id="PTHR10458">
    <property type="entry name" value="PEPTIDE DEFORMYLASE"/>
    <property type="match status" value="1"/>
</dbReference>
<dbReference type="PANTHER" id="PTHR10458:SF2">
    <property type="entry name" value="PEPTIDE DEFORMYLASE, MITOCHONDRIAL"/>
    <property type="match status" value="1"/>
</dbReference>
<dbReference type="Pfam" id="PF01327">
    <property type="entry name" value="Pep_deformylase"/>
    <property type="match status" value="1"/>
</dbReference>
<dbReference type="PIRSF" id="PIRSF004749">
    <property type="entry name" value="Pep_def"/>
    <property type="match status" value="1"/>
</dbReference>
<dbReference type="PRINTS" id="PR01576">
    <property type="entry name" value="PDEFORMYLASE"/>
</dbReference>
<dbReference type="SUPFAM" id="SSF56420">
    <property type="entry name" value="Peptide deformylase"/>
    <property type="match status" value="1"/>
</dbReference>
<feature type="chain" id="PRO_0000427997" description="Peptide deformylase">
    <location>
        <begin position="1"/>
        <end position="197"/>
    </location>
</feature>
<feature type="active site" evidence="1">
    <location>
        <position position="149"/>
    </location>
</feature>
<feature type="binding site" evidence="1">
    <location>
        <position position="106"/>
    </location>
    <ligand>
        <name>Fe cation</name>
        <dbReference type="ChEBI" id="CHEBI:24875"/>
    </ligand>
</feature>
<feature type="binding site" evidence="1">
    <location>
        <position position="148"/>
    </location>
    <ligand>
        <name>Fe cation</name>
        <dbReference type="ChEBI" id="CHEBI:24875"/>
    </ligand>
</feature>
<feature type="binding site" evidence="1">
    <location>
        <position position="152"/>
    </location>
    <ligand>
        <name>Fe cation</name>
        <dbReference type="ChEBI" id="CHEBI:24875"/>
    </ligand>
</feature>
<keyword id="KW-0378">Hydrolase</keyword>
<keyword id="KW-0408">Iron</keyword>
<keyword id="KW-0479">Metal-binding</keyword>
<keyword id="KW-0648">Protein biosynthesis</keyword>
<keyword id="KW-1185">Reference proteome</keyword>
<name>DEF_MYCTO</name>